<proteinExistence type="predicted"/>
<dbReference type="EMBL" id="J01917">
    <property type="status" value="NOT_ANNOTATED_CDS"/>
    <property type="molecule type" value="Genomic_DNA"/>
</dbReference>
<dbReference type="PIR" id="D92351">
    <property type="entry name" value="A03859"/>
</dbReference>
<dbReference type="Proteomes" id="UP000008167">
    <property type="component" value="Segment"/>
</dbReference>
<dbReference type="InterPro" id="IPR035153">
    <property type="entry name" value="DUF5473"/>
</dbReference>
<dbReference type="Pfam" id="PF17567">
    <property type="entry name" value="DUF5473"/>
    <property type="match status" value="1"/>
</dbReference>
<sequence length="106" mass="11668">MERRVWFLSRSARSLAAMFSCTYSRATHRHSGKTVVRSSGTRCTRQPRLCRVTRSTLVATSPRRRSLVQQRRPPLREQNGGSGSSCVSSGGSASTVKTPGSRRASK</sequence>
<accession>P03287</accession>
<name>Y116_ADE02</name>
<protein>
    <recommendedName>
        <fullName>Uncharacterized 11.6 kDa early protein</fullName>
    </recommendedName>
</protein>
<organism>
    <name type="scientific">Human adenovirus C serotype 2</name>
    <name type="common">HAdV-2</name>
    <name type="synonym">Human adenovirus 2</name>
    <dbReference type="NCBI Taxonomy" id="10515"/>
    <lineage>
        <taxon>Viruses</taxon>
        <taxon>Varidnaviria</taxon>
        <taxon>Bamfordvirae</taxon>
        <taxon>Preplasmiviricota</taxon>
        <taxon>Tectiliviricetes</taxon>
        <taxon>Rowavirales</taxon>
        <taxon>Adenoviridae</taxon>
        <taxon>Mastadenovirus</taxon>
        <taxon>Human mastadenovirus C</taxon>
    </lineage>
</organism>
<organismHost>
    <name type="scientific">Homo sapiens</name>
    <name type="common">Human</name>
    <dbReference type="NCBI Taxonomy" id="9606"/>
</organismHost>
<evidence type="ECO:0000256" key="1">
    <source>
        <dbReference type="SAM" id="MobiDB-lite"/>
    </source>
</evidence>
<keyword id="KW-0244">Early protein</keyword>
<keyword id="KW-1185">Reference proteome</keyword>
<feature type="chain" id="PRO_0000221920" description="Uncharacterized 11.6 kDa early protein">
    <location>
        <begin position="1"/>
        <end position="106"/>
    </location>
</feature>
<feature type="region of interest" description="Disordered" evidence="1">
    <location>
        <begin position="54"/>
        <end position="106"/>
    </location>
</feature>
<feature type="compositionally biased region" description="Low complexity" evidence="1">
    <location>
        <begin position="84"/>
        <end position="94"/>
    </location>
</feature>
<reference key="1">
    <citation type="journal article" date="1982" name="J. Biol. Chem.">
        <title>Nucleotide sequences from the adenovirus-2 genome.</title>
        <authorList>
            <person name="Gingeras T.R."/>
            <person name="Sciaky D."/>
            <person name="Gelinas R.E."/>
            <person name="Bing-Dong J."/>
            <person name="Yen C.E."/>
            <person name="Kelly M.M."/>
            <person name="Bullock P.A."/>
            <person name="Parsons B.L."/>
            <person name="O'Neill K.E."/>
            <person name="Roberts R.J."/>
        </authorList>
    </citation>
    <scope>NUCLEOTIDE SEQUENCE [GENOMIC DNA]</scope>
</reference>
<reference key="2">
    <citation type="journal article" date="1982" name="J. Biol. Chem.">
        <title>DNA sequence analysis of the region encoding the terminal protein and the hypothetical N-gene product of adenovirus type 2.</title>
        <authorList>
            <person name="Alestroem P."/>
            <person name="Akusjaervi G."/>
            <person name="Pettersson M."/>
            <person name="Pettersson U."/>
        </authorList>
    </citation>
    <scope>NUCLEOTIDE SEQUENCE [GENOMIC DNA]</scope>
</reference>